<gene>
    <name evidence="1" type="primary">ribB</name>
    <name type="ordered locus">BUAPTUC7_059</name>
</gene>
<feature type="chain" id="PRO_1000193753" description="3,4-dihydroxy-2-butanone 4-phosphate synthase">
    <location>
        <begin position="1"/>
        <end position="215"/>
    </location>
</feature>
<feature type="binding site" evidence="1">
    <location>
        <begin position="37"/>
        <end position="38"/>
    </location>
    <ligand>
        <name>D-ribulose 5-phosphate</name>
        <dbReference type="ChEBI" id="CHEBI:58121"/>
    </ligand>
</feature>
<feature type="binding site" evidence="1">
    <location>
        <position position="38"/>
    </location>
    <ligand>
        <name>Mg(2+)</name>
        <dbReference type="ChEBI" id="CHEBI:18420"/>
        <label>1</label>
    </ligand>
</feature>
<feature type="binding site" evidence="1">
    <location>
        <position position="38"/>
    </location>
    <ligand>
        <name>Mg(2+)</name>
        <dbReference type="ChEBI" id="CHEBI:18420"/>
        <label>2</label>
    </ligand>
</feature>
<feature type="binding site" evidence="1">
    <location>
        <position position="42"/>
    </location>
    <ligand>
        <name>D-ribulose 5-phosphate</name>
        <dbReference type="ChEBI" id="CHEBI:58121"/>
    </ligand>
</feature>
<feature type="binding site" evidence="1">
    <location>
        <begin position="150"/>
        <end position="154"/>
    </location>
    <ligand>
        <name>D-ribulose 5-phosphate</name>
        <dbReference type="ChEBI" id="CHEBI:58121"/>
    </ligand>
</feature>
<feature type="binding site" evidence="1">
    <location>
        <position position="153"/>
    </location>
    <ligand>
        <name>Mg(2+)</name>
        <dbReference type="ChEBI" id="CHEBI:18420"/>
        <label>2</label>
    </ligand>
</feature>
<feature type="binding site" evidence="1">
    <location>
        <position position="174"/>
    </location>
    <ligand>
        <name>D-ribulose 5-phosphate</name>
        <dbReference type="ChEBI" id="CHEBI:58121"/>
    </ligand>
</feature>
<feature type="site" description="Essential for catalytic activity" evidence="1">
    <location>
        <position position="136"/>
    </location>
</feature>
<feature type="site" description="Essential for catalytic activity" evidence="1">
    <location>
        <position position="174"/>
    </location>
</feature>
<sequence>MNQTLLSKFGKPIERIKNAILALKSGQGVIILDDEERENEGDLVFACENMTVEQMALSIRYGSGIVCLCITESKRKQLNLPMMVKKNTSAYRTGFTVTIEASKGISTGVSAKDRLTTIKTAIADDAKPSDLNRPGHVFPLRAHKGGVLSRPGHTEAAIEIVSLAGFKPAGVICELTNKDGTMARTPEIIKFSENKKMQVLTIQDLIFYIKNINHL</sequence>
<evidence type="ECO:0000255" key="1">
    <source>
        <dbReference type="HAMAP-Rule" id="MF_00180"/>
    </source>
</evidence>
<dbReference type="EC" id="4.1.99.12" evidence="1"/>
<dbReference type="EMBL" id="CP001158">
    <property type="protein sequence ID" value="ACL29886.1"/>
    <property type="molecule type" value="Genomic_DNA"/>
</dbReference>
<dbReference type="RefSeq" id="WP_009874016.1">
    <property type="nucleotide sequence ID" value="NC_011834.1"/>
</dbReference>
<dbReference type="SMR" id="B8D6X1"/>
<dbReference type="KEGG" id="bau:BUAPTUC7_059"/>
<dbReference type="HOGENOM" id="CLU_020273_3_0_6"/>
<dbReference type="UniPathway" id="UPA00275">
    <property type="reaction ID" value="UER00399"/>
</dbReference>
<dbReference type="GO" id="GO:0005829">
    <property type="term" value="C:cytosol"/>
    <property type="evidence" value="ECO:0007669"/>
    <property type="project" value="TreeGrafter"/>
</dbReference>
<dbReference type="GO" id="GO:0008686">
    <property type="term" value="F:3,4-dihydroxy-2-butanone-4-phosphate synthase activity"/>
    <property type="evidence" value="ECO:0007669"/>
    <property type="project" value="UniProtKB-UniRule"/>
</dbReference>
<dbReference type="GO" id="GO:0000287">
    <property type="term" value="F:magnesium ion binding"/>
    <property type="evidence" value="ECO:0007669"/>
    <property type="project" value="UniProtKB-UniRule"/>
</dbReference>
<dbReference type="GO" id="GO:0030145">
    <property type="term" value="F:manganese ion binding"/>
    <property type="evidence" value="ECO:0007669"/>
    <property type="project" value="UniProtKB-UniRule"/>
</dbReference>
<dbReference type="GO" id="GO:0009231">
    <property type="term" value="P:riboflavin biosynthetic process"/>
    <property type="evidence" value="ECO:0007669"/>
    <property type="project" value="UniProtKB-UniRule"/>
</dbReference>
<dbReference type="FunFam" id="3.90.870.10:FF:000002">
    <property type="entry name" value="3,4-dihydroxy-2-butanone 4-phosphate synthase"/>
    <property type="match status" value="1"/>
</dbReference>
<dbReference type="Gene3D" id="3.90.870.10">
    <property type="entry name" value="DHBP synthase"/>
    <property type="match status" value="1"/>
</dbReference>
<dbReference type="HAMAP" id="MF_00180">
    <property type="entry name" value="RibB"/>
    <property type="match status" value="1"/>
</dbReference>
<dbReference type="InterPro" id="IPR017945">
    <property type="entry name" value="DHBP_synth_RibB-like_a/b_dom"/>
</dbReference>
<dbReference type="InterPro" id="IPR000422">
    <property type="entry name" value="DHBP_synthase_RibB"/>
</dbReference>
<dbReference type="NCBIfam" id="TIGR00506">
    <property type="entry name" value="ribB"/>
    <property type="match status" value="1"/>
</dbReference>
<dbReference type="PANTHER" id="PTHR21327:SF38">
    <property type="entry name" value="3,4-DIHYDROXY-2-BUTANONE 4-PHOSPHATE SYNTHASE"/>
    <property type="match status" value="1"/>
</dbReference>
<dbReference type="PANTHER" id="PTHR21327">
    <property type="entry name" value="GTP CYCLOHYDROLASE II-RELATED"/>
    <property type="match status" value="1"/>
</dbReference>
<dbReference type="Pfam" id="PF00926">
    <property type="entry name" value="DHBP_synthase"/>
    <property type="match status" value="1"/>
</dbReference>
<dbReference type="SUPFAM" id="SSF55821">
    <property type="entry name" value="YrdC/RibB"/>
    <property type="match status" value="1"/>
</dbReference>
<comment type="function">
    <text evidence="1">Catalyzes the conversion of D-ribulose 5-phosphate to formate and 3,4-dihydroxy-2-butanone 4-phosphate.</text>
</comment>
<comment type="catalytic activity">
    <reaction evidence="1">
        <text>D-ribulose 5-phosphate = (2S)-2-hydroxy-3-oxobutyl phosphate + formate + H(+)</text>
        <dbReference type="Rhea" id="RHEA:18457"/>
        <dbReference type="ChEBI" id="CHEBI:15378"/>
        <dbReference type="ChEBI" id="CHEBI:15740"/>
        <dbReference type="ChEBI" id="CHEBI:58121"/>
        <dbReference type="ChEBI" id="CHEBI:58830"/>
        <dbReference type="EC" id="4.1.99.12"/>
    </reaction>
</comment>
<comment type="cofactor">
    <cofactor evidence="1">
        <name>Mg(2+)</name>
        <dbReference type="ChEBI" id="CHEBI:18420"/>
    </cofactor>
    <cofactor evidence="1">
        <name>Mn(2+)</name>
        <dbReference type="ChEBI" id="CHEBI:29035"/>
    </cofactor>
    <text evidence="1">Binds 2 divalent metal cations per subunit. Magnesium or manganese.</text>
</comment>
<comment type="pathway">
    <text evidence="1">Cofactor biosynthesis; riboflavin biosynthesis; 2-hydroxy-3-oxobutyl phosphate from D-ribulose 5-phosphate: step 1/1.</text>
</comment>
<comment type="subunit">
    <text evidence="1">Homodimer.</text>
</comment>
<comment type="similarity">
    <text evidence="1">Belongs to the DHBP synthase family.</text>
</comment>
<accession>B8D6X1</accession>
<proteinExistence type="inferred from homology"/>
<organism>
    <name type="scientific">Buchnera aphidicola subsp. Acyrthosiphon pisum (strain Tuc7)</name>
    <dbReference type="NCBI Taxonomy" id="561501"/>
    <lineage>
        <taxon>Bacteria</taxon>
        <taxon>Pseudomonadati</taxon>
        <taxon>Pseudomonadota</taxon>
        <taxon>Gammaproteobacteria</taxon>
        <taxon>Enterobacterales</taxon>
        <taxon>Erwiniaceae</taxon>
        <taxon>Buchnera</taxon>
    </lineage>
</organism>
<keyword id="KW-0456">Lyase</keyword>
<keyword id="KW-0460">Magnesium</keyword>
<keyword id="KW-0464">Manganese</keyword>
<keyword id="KW-0479">Metal-binding</keyword>
<keyword id="KW-0686">Riboflavin biosynthesis</keyword>
<name>RIBB_BUCAT</name>
<protein>
    <recommendedName>
        <fullName evidence="1">3,4-dihydroxy-2-butanone 4-phosphate synthase</fullName>
        <shortName evidence="1">DHBP synthase</shortName>
        <ecNumber evidence="1">4.1.99.12</ecNumber>
    </recommendedName>
</protein>
<reference key="1">
    <citation type="journal article" date="2009" name="Science">
        <title>The dynamics and time scale of ongoing genomic erosion in symbiotic bacteria.</title>
        <authorList>
            <person name="Moran N.A."/>
            <person name="McLaughlin H.J."/>
            <person name="Sorek R."/>
        </authorList>
    </citation>
    <scope>NUCLEOTIDE SEQUENCE [LARGE SCALE GENOMIC DNA]</scope>
    <source>
        <strain>Tuc7</strain>
    </source>
</reference>